<evidence type="ECO:0000255" key="1">
    <source>
        <dbReference type="HAMAP-Rule" id="MF_00682"/>
    </source>
</evidence>
<keyword id="KW-0143">Chaperone</keyword>
<protein>
    <recommendedName>
        <fullName evidence="1">Co-chaperone protein HscB</fullName>
    </recommendedName>
    <alternativeName>
        <fullName evidence="1">Hsc20</fullName>
    </alternativeName>
</protein>
<comment type="function">
    <text evidence="1">Co-chaperone involved in the maturation of iron-sulfur cluster-containing proteins. Seems to help targeting proteins to be folded toward HscA.</text>
</comment>
<comment type="subunit">
    <text evidence="1">Interacts with HscA and stimulates its ATPase activity. Interacts with IscU.</text>
</comment>
<comment type="similarity">
    <text evidence="1">Belongs to the HscB family.</text>
</comment>
<sequence length="174" mass="21332">MNYFALFDLPRKFNIDKKLLSQNFYKLQLKFHPDLFINDSESKKKIILEKSIQINKGYKTLKNFLNRAIYFLCLNGYEVKKETLLLKNNDFLIRYFSLYEQLDNLKENNFNKKELNNLEQIIQKKIIYCKKKIELEFEKTRYKKVIKIISELLFFEKIKDVLKKEYNIYLRQIN</sequence>
<organism>
    <name type="scientific">Buchnera aphidicola subsp. Acyrthosiphon pisum (strain 5A)</name>
    <dbReference type="NCBI Taxonomy" id="563178"/>
    <lineage>
        <taxon>Bacteria</taxon>
        <taxon>Pseudomonadati</taxon>
        <taxon>Pseudomonadota</taxon>
        <taxon>Gammaproteobacteria</taxon>
        <taxon>Enterobacterales</taxon>
        <taxon>Erwiniaceae</taxon>
        <taxon>Buchnera</taxon>
    </lineage>
</organism>
<name>HSCB_BUCA5</name>
<proteinExistence type="inferred from homology"/>
<reference key="1">
    <citation type="journal article" date="2009" name="Science">
        <title>The dynamics and time scale of ongoing genomic erosion in symbiotic bacteria.</title>
        <authorList>
            <person name="Moran N.A."/>
            <person name="McLaughlin H.J."/>
            <person name="Sorek R."/>
        </authorList>
    </citation>
    <scope>NUCLEOTIDE SEQUENCE [LARGE SCALE GENOMIC DNA]</scope>
    <source>
        <strain>5A</strain>
    </source>
</reference>
<feature type="chain" id="PRO_1000189910" description="Co-chaperone protein HscB">
    <location>
        <begin position="1"/>
        <end position="174"/>
    </location>
</feature>
<feature type="domain" description="J" evidence="1">
    <location>
        <begin position="2"/>
        <end position="74"/>
    </location>
</feature>
<gene>
    <name evidence="1" type="primary">hscB</name>
    <name type="ordered locus">BUAP5A_596</name>
</gene>
<accession>B8D8G1</accession>
<dbReference type="EMBL" id="CP001161">
    <property type="protein sequence ID" value="ACL30937.1"/>
    <property type="molecule type" value="Genomic_DNA"/>
</dbReference>
<dbReference type="RefSeq" id="WP_009874551.1">
    <property type="nucleotide sequence ID" value="NC_011833.1"/>
</dbReference>
<dbReference type="SMR" id="B8D8G1"/>
<dbReference type="KEGG" id="bap:BUAP5A_596"/>
<dbReference type="HOGENOM" id="CLU_068529_2_0_6"/>
<dbReference type="OrthoDB" id="287587at2"/>
<dbReference type="Proteomes" id="UP000006904">
    <property type="component" value="Chromosome"/>
</dbReference>
<dbReference type="GO" id="GO:0001671">
    <property type="term" value="F:ATPase activator activity"/>
    <property type="evidence" value="ECO:0007669"/>
    <property type="project" value="InterPro"/>
</dbReference>
<dbReference type="GO" id="GO:0051087">
    <property type="term" value="F:protein-folding chaperone binding"/>
    <property type="evidence" value="ECO:0007669"/>
    <property type="project" value="InterPro"/>
</dbReference>
<dbReference type="GO" id="GO:0044571">
    <property type="term" value="P:[2Fe-2S] cluster assembly"/>
    <property type="evidence" value="ECO:0007669"/>
    <property type="project" value="InterPro"/>
</dbReference>
<dbReference type="GO" id="GO:0051259">
    <property type="term" value="P:protein complex oligomerization"/>
    <property type="evidence" value="ECO:0007669"/>
    <property type="project" value="InterPro"/>
</dbReference>
<dbReference type="GO" id="GO:0006457">
    <property type="term" value="P:protein folding"/>
    <property type="evidence" value="ECO:0007669"/>
    <property type="project" value="UniProtKB-UniRule"/>
</dbReference>
<dbReference type="CDD" id="cd06257">
    <property type="entry name" value="DnaJ"/>
    <property type="match status" value="1"/>
</dbReference>
<dbReference type="Gene3D" id="1.10.287.110">
    <property type="entry name" value="DnaJ domain"/>
    <property type="match status" value="1"/>
</dbReference>
<dbReference type="Gene3D" id="1.20.1280.20">
    <property type="entry name" value="HscB, C-terminal domain"/>
    <property type="match status" value="1"/>
</dbReference>
<dbReference type="HAMAP" id="MF_00682">
    <property type="entry name" value="HscB"/>
    <property type="match status" value="1"/>
</dbReference>
<dbReference type="InterPro" id="IPR001623">
    <property type="entry name" value="DnaJ_domain"/>
</dbReference>
<dbReference type="InterPro" id="IPR004640">
    <property type="entry name" value="HscB"/>
</dbReference>
<dbReference type="InterPro" id="IPR036386">
    <property type="entry name" value="HscB_C_sf"/>
</dbReference>
<dbReference type="InterPro" id="IPR009073">
    <property type="entry name" value="HscB_oligo_C"/>
</dbReference>
<dbReference type="InterPro" id="IPR036869">
    <property type="entry name" value="J_dom_sf"/>
</dbReference>
<dbReference type="NCBIfam" id="TIGR00714">
    <property type="entry name" value="hscB"/>
    <property type="match status" value="1"/>
</dbReference>
<dbReference type="PANTHER" id="PTHR14021">
    <property type="entry name" value="IRON-SULFUR CLUSTER CO-CHAPERONE PROTEIN HSCB"/>
    <property type="match status" value="1"/>
</dbReference>
<dbReference type="PANTHER" id="PTHR14021:SF15">
    <property type="entry name" value="IRON-SULFUR CLUSTER CO-CHAPERONE PROTEIN HSCB"/>
    <property type="match status" value="1"/>
</dbReference>
<dbReference type="Pfam" id="PF07743">
    <property type="entry name" value="HSCB_C"/>
    <property type="match status" value="1"/>
</dbReference>
<dbReference type="SMART" id="SM00271">
    <property type="entry name" value="DnaJ"/>
    <property type="match status" value="1"/>
</dbReference>
<dbReference type="SUPFAM" id="SSF46565">
    <property type="entry name" value="Chaperone J-domain"/>
    <property type="match status" value="1"/>
</dbReference>
<dbReference type="SUPFAM" id="SSF47144">
    <property type="entry name" value="HSC20 (HSCB), C-terminal oligomerisation domain"/>
    <property type="match status" value="1"/>
</dbReference>
<dbReference type="PROSITE" id="PS50076">
    <property type="entry name" value="DNAJ_2"/>
    <property type="match status" value="1"/>
</dbReference>